<comment type="function">
    <text evidence="2">Component of the ubiquinol-cytochrome c reductase complex (complex III or cytochrome b-c1 complex) that is part of the mitochondrial respiratory chain. The b-c1 complex mediates electron transfer from ubiquinol to cytochrome c. Contributes to the generation of a proton gradient across the mitochondrial membrane that is then used for ATP synthesis.</text>
</comment>
<comment type="cofactor">
    <cofactor evidence="2">
        <name>heme b</name>
        <dbReference type="ChEBI" id="CHEBI:60344"/>
    </cofactor>
    <text evidence="2">Binds 2 heme b groups non-covalently.</text>
</comment>
<comment type="subunit">
    <text evidence="2">The cytochrome bc1 complex contains 11 subunits: 3 respiratory subunits (MT-CYB, CYC1 and UQCRFS1), 2 core proteins (UQCRC1 and UQCRC2) and 6 low-molecular weight proteins (UQCRH/QCR6, UQCRB/QCR7, UQCRQ/QCR8, UQCR10/QCR9, UQCR11/QCR10 and a cleavage product of UQCRFS1). This cytochrome bc1 complex then forms a dimer.</text>
</comment>
<comment type="subcellular location">
    <subcellularLocation>
        <location evidence="2">Mitochondrion inner membrane</location>
        <topology evidence="2">Multi-pass membrane protein</topology>
    </subcellularLocation>
</comment>
<comment type="miscellaneous">
    <text evidence="1">Heme 1 (or BL or b562) is low-potential and absorbs at about 562 nm, and heme 2 (or BH or b566) is high-potential and absorbs at about 566 nm.</text>
</comment>
<comment type="similarity">
    <text evidence="3 4">Belongs to the cytochrome b family.</text>
</comment>
<comment type="caution">
    <text evidence="2">The full-length protein contains only eight transmembrane helices, not nine as predicted by bioinformatics tools.</text>
</comment>
<evidence type="ECO:0000250" key="1"/>
<evidence type="ECO:0000250" key="2">
    <source>
        <dbReference type="UniProtKB" id="P00157"/>
    </source>
</evidence>
<evidence type="ECO:0000255" key="3">
    <source>
        <dbReference type="PROSITE-ProRule" id="PRU00967"/>
    </source>
</evidence>
<evidence type="ECO:0000255" key="4">
    <source>
        <dbReference type="PROSITE-ProRule" id="PRU00968"/>
    </source>
</evidence>
<evidence type="ECO:0000305" key="5"/>
<geneLocation type="mitochondrion"/>
<accession>P29634</accession>
<accession>Q34109</accession>
<proteinExistence type="inferred from homology"/>
<organism>
    <name type="scientific">Catharus guttatus</name>
    <name type="common">Hermit thrush</name>
    <name type="synonym">Hylocichla guttata</name>
    <dbReference type="NCBI Taxonomy" id="9185"/>
    <lineage>
        <taxon>Eukaryota</taxon>
        <taxon>Metazoa</taxon>
        <taxon>Chordata</taxon>
        <taxon>Craniata</taxon>
        <taxon>Vertebrata</taxon>
        <taxon>Euteleostomi</taxon>
        <taxon>Archelosauria</taxon>
        <taxon>Archosauria</taxon>
        <taxon>Dinosauria</taxon>
        <taxon>Saurischia</taxon>
        <taxon>Theropoda</taxon>
        <taxon>Coelurosauria</taxon>
        <taxon>Aves</taxon>
        <taxon>Neognathae</taxon>
        <taxon>Neoaves</taxon>
        <taxon>Telluraves</taxon>
        <taxon>Australaves</taxon>
        <taxon>Passeriformes</taxon>
        <taxon>Turdidae</taxon>
        <taxon>Catharus</taxon>
    </lineage>
</organism>
<sequence length="380" mass="42439">MALNLRKNHPLLKTINDALIDLPTPSNISTWWNFGSLLGICLVTQIVTGLLLAMHYTADTSLAFNSVAHMCRNVQFGWLIRNLHANGASFFFICIYLHIGRGIYYGSYLNKETWNIGVILLLTLMATAFVGYVLPWGQMSFWGATVITNLFSAIPYIGQTLVEWAWGGFSVDNPTLTRFFALHFLLPFVIAGLTLVHLTFLHETGSNNPLGIPADCDKIPFHPYYSTKDILGFALMLILLISLALFSPNMLGDPENFTPANPLATPPHIKPEWYFLFAYAILRSIPNKLGGVLALAASVLVLFLFPLLHKSKQRSMTFRPLSQILFWTLVANLLVLTWVGSQPVEHPFIIIGQLASISYFTIILVLFPLAAVLENKMLKL</sequence>
<dbReference type="EMBL" id="X74261">
    <property type="protein sequence ID" value="CAA52320.1"/>
    <property type="molecule type" value="Genomic_DNA"/>
</dbReference>
<dbReference type="EMBL" id="X60939">
    <property type="protein sequence ID" value="CAA43274.1"/>
    <property type="molecule type" value="Genomic_DNA"/>
</dbReference>
<dbReference type="PIR" id="S22922">
    <property type="entry name" value="S22922"/>
</dbReference>
<dbReference type="SMR" id="P29634"/>
<dbReference type="GO" id="GO:0005743">
    <property type="term" value="C:mitochondrial inner membrane"/>
    <property type="evidence" value="ECO:0007669"/>
    <property type="project" value="UniProtKB-SubCell"/>
</dbReference>
<dbReference type="GO" id="GO:0045275">
    <property type="term" value="C:respiratory chain complex III"/>
    <property type="evidence" value="ECO:0007669"/>
    <property type="project" value="InterPro"/>
</dbReference>
<dbReference type="GO" id="GO:0046872">
    <property type="term" value="F:metal ion binding"/>
    <property type="evidence" value="ECO:0007669"/>
    <property type="project" value="UniProtKB-KW"/>
</dbReference>
<dbReference type="GO" id="GO:0008121">
    <property type="term" value="F:ubiquinol-cytochrome-c reductase activity"/>
    <property type="evidence" value="ECO:0007669"/>
    <property type="project" value="InterPro"/>
</dbReference>
<dbReference type="GO" id="GO:0006122">
    <property type="term" value="P:mitochondrial electron transport, ubiquinol to cytochrome c"/>
    <property type="evidence" value="ECO:0007669"/>
    <property type="project" value="TreeGrafter"/>
</dbReference>
<dbReference type="CDD" id="cd00290">
    <property type="entry name" value="cytochrome_b_C"/>
    <property type="match status" value="1"/>
</dbReference>
<dbReference type="CDD" id="cd00284">
    <property type="entry name" value="Cytochrome_b_N"/>
    <property type="match status" value="1"/>
</dbReference>
<dbReference type="FunFam" id="1.20.810.10:FF:000002">
    <property type="entry name" value="Cytochrome b"/>
    <property type="match status" value="1"/>
</dbReference>
<dbReference type="Gene3D" id="1.20.810.10">
    <property type="entry name" value="Cytochrome Bc1 Complex, Chain C"/>
    <property type="match status" value="1"/>
</dbReference>
<dbReference type="InterPro" id="IPR005798">
    <property type="entry name" value="Cyt_b/b6_C"/>
</dbReference>
<dbReference type="InterPro" id="IPR036150">
    <property type="entry name" value="Cyt_b/b6_C_sf"/>
</dbReference>
<dbReference type="InterPro" id="IPR005797">
    <property type="entry name" value="Cyt_b/b6_N"/>
</dbReference>
<dbReference type="InterPro" id="IPR027387">
    <property type="entry name" value="Cytb/b6-like_sf"/>
</dbReference>
<dbReference type="InterPro" id="IPR030689">
    <property type="entry name" value="Cytochrome_b"/>
</dbReference>
<dbReference type="InterPro" id="IPR048260">
    <property type="entry name" value="Cytochrome_b_C_euk/bac"/>
</dbReference>
<dbReference type="InterPro" id="IPR048259">
    <property type="entry name" value="Cytochrome_b_N_euk/bac"/>
</dbReference>
<dbReference type="InterPro" id="IPR016174">
    <property type="entry name" value="Di-haem_cyt_TM"/>
</dbReference>
<dbReference type="PANTHER" id="PTHR19271">
    <property type="entry name" value="CYTOCHROME B"/>
    <property type="match status" value="1"/>
</dbReference>
<dbReference type="PANTHER" id="PTHR19271:SF16">
    <property type="entry name" value="CYTOCHROME B"/>
    <property type="match status" value="1"/>
</dbReference>
<dbReference type="Pfam" id="PF00032">
    <property type="entry name" value="Cytochrom_B_C"/>
    <property type="match status" value="1"/>
</dbReference>
<dbReference type="Pfam" id="PF00033">
    <property type="entry name" value="Cytochrome_B"/>
    <property type="match status" value="1"/>
</dbReference>
<dbReference type="PIRSF" id="PIRSF038885">
    <property type="entry name" value="COB"/>
    <property type="match status" value="1"/>
</dbReference>
<dbReference type="SUPFAM" id="SSF81648">
    <property type="entry name" value="a domain/subunit of cytochrome bc1 complex (Ubiquinol-cytochrome c reductase)"/>
    <property type="match status" value="1"/>
</dbReference>
<dbReference type="SUPFAM" id="SSF81342">
    <property type="entry name" value="Transmembrane di-heme cytochromes"/>
    <property type="match status" value="1"/>
</dbReference>
<dbReference type="PROSITE" id="PS51003">
    <property type="entry name" value="CYTB_CTER"/>
    <property type="match status" value="1"/>
</dbReference>
<dbReference type="PROSITE" id="PS51002">
    <property type="entry name" value="CYTB_NTER"/>
    <property type="match status" value="1"/>
</dbReference>
<protein>
    <recommendedName>
        <fullName>Cytochrome b</fullName>
    </recommendedName>
    <alternativeName>
        <fullName>Complex III subunit 3</fullName>
    </alternativeName>
    <alternativeName>
        <fullName>Complex III subunit III</fullName>
    </alternativeName>
    <alternativeName>
        <fullName>Cytochrome b-c1 complex subunit 3</fullName>
    </alternativeName>
    <alternativeName>
        <fullName>Ubiquinol-cytochrome-c reductase complex cytochrome b subunit</fullName>
    </alternativeName>
</protein>
<name>CYB_CATGU</name>
<feature type="chain" id="PRO_0000060741" description="Cytochrome b">
    <location>
        <begin position="1"/>
        <end position="380"/>
    </location>
</feature>
<feature type="transmembrane region" description="Helical" evidence="2">
    <location>
        <begin position="34"/>
        <end position="54"/>
    </location>
</feature>
<feature type="transmembrane region" description="Helical" evidence="2">
    <location>
        <begin position="78"/>
        <end position="99"/>
    </location>
</feature>
<feature type="transmembrane region" description="Helical" evidence="2">
    <location>
        <begin position="114"/>
        <end position="134"/>
    </location>
</feature>
<feature type="transmembrane region" description="Helical" evidence="2">
    <location>
        <begin position="179"/>
        <end position="199"/>
    </location>
</feature>
<feature type="transmembrane region" description="Helical" evidence="2">
    <location>
        <begin position="227"/>
        <end position="247"/>
    </location>
</feature>
<feature type="transmembrane region" description="Helical" evidence="2">
    <location>
        <begin position="289"/>
        <end position="309"/>
    </location>
</feature>
<feature type="transmembrane region" description="Helical" evidence="2">
    <location>
        <begin position="321"/>
        <end position="341"/>
    </location>
</feature>
<feature type="transmembrane region" description="Helical" evidence="2">
    <location>
        <begin position="348"/>
        <end position="368"/>
    </location>
</feature>
<feature type="binding site" description="axial binding residue" evidence="2">
    <location>
        <position position="84"/>
    </location>
    <ligand>
        <name>heme b</name>
        <dbReference type="ChEBI" id="CHEBI:60344"/>
        <label>b562</label>
    </ligand>
    <ligandPart>
        <name>Fe</name>
        <dbReference type="ChEBI" id="CHEBI:18248"/>
    </ligandPart>
</feature>
<feature type="binding site" description="axial binding residue" evidence="2">
    <location>
        <position position="98"/>
    </location>
    <ligand>
        <name>heme b</name>
        <dbReference type="ChEBI" id="CHEBI:60344"/>
        <label>b566</label>
    </ligand>
    <ligandPart>
        <name>Fe</name>
        <dbReference type="ChEBI" id="CHEBI:18248"/>
    </ligandPart>
</feature>
<feature type="binding site" description="axial binding residue" evidence="2">
    <location>
        <position position="183"/>
    </location>
    <ligand>
        <name>heme b</name>
        <dbReference type="ChEBI" id="CHEBI:60344"/>
        <label>b562</label>
    </ligand>
    <ligandPart>
        <name>Fe</name>
        <dbReference type="ChEBI" id="CHEBI:18248"/>
    </ligandPart>
</feature>
<feature type="binding site" description="axial binding residue" evidence="2">
    <location>
        <position position="197"/>
    </location>
    <ligand>
        <name>heme b</name>
        <dbReference type="ChEBI" id="CHEBI:60344"/>
        <label>b566</label>
    </ligand>
    <ligandPart>
        <name>Fe</name>
        <dbReference type="ChEBI" id="CHEBI:18248"/>
    </ligandPart>
</feature>
<feature type="binding site" evidence="2">
    <location>
        <position position="202"/>
    </location>
    <ligand>
        <name>a ubiquinone</name>
        <dbReference type="ChEBI" id="CHEBI:16389"/>
    </ligand>
</feature>
<feature type="sequence conflict" description="In Ref. 2; CAA43274." evidence="5" ref="2">
    <original>SL</original>
    <variation>PF</variation>
    <location>
        <begin position="36"/>
        <end position="37"/>
    </location>
</feature>
<feature type="sequence conflict" description="In Ref. 2; CAA43274." evidence="5" ref="2">
    <original>VT</original>
    <variation>IV</variation>
    <location>
        <begin position="43"/>
        <end position="44"/>
    </location>
</feature>
<feature type="sequence conflict" description="In Ref. 2; CAA43274." evidence="5" ref="2">
    <original>M</original>
    <variation>A</variation>
    <location>
        <position position="54"/>
    </location>
</feature>
<feature type="sequence conflict" description="In Ref. 2; CAA43274." evidence="5" ref="2">
    <original>TS</original>
    <variation>IL</variation>
    <location>
        <begin position="60"/>
        <end position="61"/>
    </location>
</feature>
<feature type="sequence conflict" description="In Ref. 2; CAA43274." evidence="5" ref="2">
    <original>N</original>
    <variation>A</variation>
    <location>
        <position position="65"/>
    </location>
</feature>
<feature type="sequence conflict" description="In Ref. 2; CAA43274." evidence="5" ref="2">
    <original>I</original>
    <variation>L</variation>
    <location>
        <position position="103"/>
    </location>
</feature>
<feature type="sequence conflict" description="In Ref. 2; CAA43274." evidence="5" ref="2">
    <original>I</original>
    <variation>M</variation>
    <location>
        <position position="116"/>
    </location>
</feature>
<feature type="sequence conflict" description="In Ref. 2; CAA43274." evidence="5" ref="2">
    <original>V</original>
    <variation>A</variation>
    <location>
        <position position="133"/>
    </location>
</feature>
<feature type="sequence conflict" description="In Ref. 2; CAA43274." evidence="5" ref="2">
    <original>S</original>
    <variation>P</variation>
    <location>
        <position position="247"/>
    </location>
</feature>
<keyword id="KW-0249">Electron transport</keyword>
<keyword id="KW-0349">Heme</keyword>
<keyword id="KW-0408">Iron</keyword>
<keyword id="KW-0472">Membrane</keyword>
<keyword id="KW-0479">Metal-binding</keyword>
<keyword id="KW-0496">Mitochondrion</keyword>
<keyword id="KW-0999">Mitochondrion inner membrane</keyword>
<keyword id="KW-0679">Respiratory chain</keyword>
<keyword id="KW-0812">Transmembrane</keyword>
<keyword id="KW-1133">Transmembrane helix</keyword>
<keyword id="KW-0813">Transport</keyword>
<keyword id="KW-0830">Ubiquinone</keyword>
<gene>
    <name type="primary">MT-CYB</name>
    <name type="synonym">COB</name>
    <name type="synonym">CYTB</name>
    <name type="synonym">MTCYB</name>
</gene>
<reference key="1">
    <citation type="journal article" date="1993" name="Mol. Biol. Evol.">
        <title>Recovering phylogenetic signal from DNA sequences: relationships within the corvine assemblage (class aves) as inferred from complete sequences of the mitochondrial DNA cytochrome-b gene.</title>
        <authorList>
            <person name="Helm-Bychowski K."/>
            <person name="Cracraft J."/>
        </authorList>
    </citation>
    <scope>NUCLEOTIDE SEQUENCE [GENOMIC DNA]</scope>
</reference>
<reference key="2">
    <citation type="journal article" date="1991" name="Proc. R. Soc. B">
        <title>Mitochondrial resolution of a deep branch in the genealogical tree for perching birds.</title>
        <authorList>
            <person name="Edwards S.V."/>
            <person name="Arctander P."/>
            <person name="Wilson A.C."/>
        </authorList>
    </citation>
    <scope>NUCLEOTIDE SEQUENCE [GENOMIC DNA] OF 34-341</scope>
</reference>
<reference key="3">
    <citation type="journal article" date="1996" name="Proc. R. Soc. B">
        <authorList>
            <person name="Edwards S.V."/>
            <person name="Arctander P."/>
        </authorList>
    </citation>
    <scope>ERRATUM OF PUBMED:1676522</scope>
</reference>